<proteinExistence type="evidence at transcript level"/>
<organism evidence="5">
    <name type="scientific">Arabidopsis thaliana</name>
    <name type="common">Mouse-ear cress</name>
    <dbReference type="NCBI Taxonomy" id="3702"/>
    <lineage>
        <taxon>Eukaryota</taxon>
        <taxon>Viridiplantae</taxon>
        <taxon>Streptophyta</taxon>
        <taxon>Embryophyta</taxon>
        <taxon>Tracheophyta</taxon>
        <taxon>Spermatophyta</taxon>
        <taxon>Magnoliopsida</taxon>
        <taxon>eudicotyledons</taxon>
        <taxon>Gunneridae</taxon>
        <taxon>Pentapetalae</taxon>
        <taxon>rosids</taxon>
        <taxon>malvids</taxon>
        <taxon>Brassicales</taxon>
        <taxon>Brassicaceae</taxon>
        <taxon>Camelineae</taxon>
        <taxon>Arabidopsis</taxon>
    </lineage>
</organism>
<accession>B6IDH3</accession>
<accession>Q9M023</accession>
<evidence type="ECO:0000256" key="1">
    <source>
        <dbReference type="SAM" id="MobiDB-lite"/>
    </source>
</evidence>
<evidence type="ECO:0000303" key="2">
    <source>
    </source>
</evidence>
<evidence type="ECO:0000305" key="3"/>
<evidence type="ECO:0000312" key="4">
    <source>
        <dbReference type="Araport" id="AT5G01510"/>
    </source>
</evidence>
<evidence type="ECO:0000312" key="5">
    <source>
        <dbReference type="EMBL" id="ACI88737.1"/>
    </source>
</evidence>
<evidence type="ECO:0000312" key="6">
    <source>
        <dbReference type="EMBL" id="CAB82267.1"/>
    </source>
</evidence>
<protein>
    <recommendedName>
        <fullName evidence="2">Protein root UVB sensitive 5</fullName>
    </recommendedName>
</protein>
<name>RUS5_ARATH</name>
<gene>
    <name evidence="2" type="primary">RUS5</name>
    <name evidence="4" type="ordered locus">At5g01510</name>
    <name evidence="6" type="ORF">F7A7.30</name>
</gene>
<sequence>MYCTLRFPLPLHIPQTRTMTSCQPKRRRVEHLRCSAQPSSIREDDEDADDRRVGVERRISIVVERYGNGTSKRYFLDDDDSPLQGILEERETKPDNNSQSSNSSETNILWLPDVVRDFVFPSGFPGSVSDDYLDYMLWQFPTNITGWICNVLVTSSLLKAVGVGSFSGTSAAATAAASAAAIRWVSKDGIGALGRLLIGGRFGSLFDDDPKQWRMYADFIGSAGSFFDLATQLYPSQFLLLASTGNLAKAVARGLRDPSFRVIQNHFAISGNLGEVAAKEEVWEVAAQLIGLGFGILIIDTPGLVKSFPFVLLTWTSIRLVHLWLRYQSLAVLQFNTVNLKRARIIVESHVVHSVVPGYVDCNKRENILLWQRFMKPRIIFGVSLEELSGLEKSVSKVKALLKMYTKEKYILTLNKLNKDTEFSVSFKVNATSRDVLRCLWQAYWLEENMEESFKDKDSVFHWLKQSLSEMDNKFDDFLFKLDTAGWNLRESNLKVPNQVLIDQESIPF</sequence>
<feature type="chain" id="PRO_0000430822" description="Protein root UVB sensitive 5">
    <location>
        <begin position="1"/>
        <end position="509"/>
    </location>
</feature>
<feature type="region of interest" description="Disordered" evidence="1">
    <location>
        <begin position="22"/>
        <end position="49"/>
    </location>
</feature>
<reference key="1">
    <citation type="journal article" date="2000" name="Nature">
        <title>Sequence and analysis of chromosome 5 of the plant Arabidopsis thaliana.</title>
        <authorList>
            <person name="Tabata S."/>
            <person name="Kaneko T."/>
            <person name="Nakamura Y."/>
            <person name="Kotani H."/>
            <person name="Kato T."/>
            <person name="Asamizu E."/>
            <person name="Miyajima N."/>
            <person name="Sasamoto S."/>
            <person name="Kimura T."/>
            <person name="Hosouchi T."/>
            <person name="Kawashima K."/>
            <person name="Kohara M."/>
            <person name="Matsumoto M."/>
            <person name="Matsuno A."/>
            <person name="Muraki A."/>
            <person name="Nakayama S."/>
            <person name="Nakazaki N."/>
            <person name="Naruo K."/>
            <person name="Okumura S."/>
            <person name="Shinpo S."/>
            <person name="Takeuchi C."/>
            <person name="Wada T."/>
            <person name="Watanabe A."/>
            <person name="Yamada M."/>
            <person name="Yasuda M."/>
            <person name="Sato S."/>
            <person name="de la Bastide M."/>
            <person name="Huang E."/>
            <person name="Spiegel L."/>
            <person name="Gnoj L."/>
            <person name="O'Shaughnessy A."/>
            <person name="Preston R."/>
            <person name="Habermann K."/>
            <person name="Murray J."/>
            <person name="Johnson D."/>
            <person name="Rohlfing T."/>
            <person name="Nelson J."/>
            <person name="Stoneking T."/>
            <person name="Pepin K."/>
            <person name="Spieth J."/>
            <person name="Sekhon M."/>
            <person name="Armstrong J."/>
            <person name="Becker M."/>
            <person name="Belter E."/>
            <person name="Cordum H."/>
            <person name="Cordes M."/>
            <person name="Courtney L."/>
            <person name="Courtney W."/>
            <person name="Dante M."/>
            <person name="Du H."/>
            <person name="Edwards J."/>
            <person name="Fryman J."/>
            <person name="Haakensen B."/>
            <person name="Lamar E."/>
            <person name="Latreille P."/>
            <person name="Leonard S."/>
            <person name="Meyer R."/>
            <person name="Mulvaney E."/>
            <person name="Ozersky P."/>
            <person name="Riley A."/>
            <person name="Strowmatt C."/>
            <person name="Wagner-McPherson C."/>
            <person name="Wollam A."/>
            <person name="Yoakum M."/>
            <person name="Bell M."/>
            <person name="Dedhia N."/>
            <person name="Parnell L."/>
            <person name="Shah R."/>
            <person name="Rodriguez M."/>
            <person name="Hoon See L."/>
            <person name="Vil D."/>
            <person name="Baker J."/>
            <person name="Kirchoff K."/>
            <person name="Toth K."/>
            <person name="King L."/>
            <person name="Bahret A."/>
            <person name="Miller B."/>
            <person name="Marra M.A."/>
            <person name="Martienssen R."/>
            <person name="McCombie W.R."/>
            <person name="Wilson R.K."/>
            <person name="Murphy G."/>
            <person name="Bancroft I."/>
            <person name="Volckaert G."/>
            <person name="Wambutt R."/>
            <person name="Duesterhoeft A."/>
            <person name="Stiekema W."/>
            <person name="Pohl T."/>
            <person name="Entian K.-D."/>
            <person name="Terryn N."/>
            <person name="Hartley N."/>
            <person name="Bent E."/>
            <person name="Johnson S."/>
            <person name="Langham S.-A."/>
            <person name="McCullagh B."/>
            <person name="Robben J."/>
            <person name="Grymonprez B."/>
            <person name="Zimmermann W."/>
            <person name="Ramsperger U."/>
            <person name="Wedler H."/>
            <person name="Balke K."/>
            <person name="Wedler E."/>
            <person name="Peters S."/>
            <person name="van Staveren M."/>
            <person name="Dirkse W."/>
            <person name="Mooijman P."/>
            <person name="Klein Lankhorst R."/>
            <person name="Weitzenegger T."/>
            <person name="Bothe G."/>
            <person name="Rose M."/>
            <person name="Hauf J."/>
            <person name="Berneiser S."/>
            <person name="Hempel S."/>
            <person name="Feldpausch M."/>
            <person name="Lamberth S."/>
            <person name="Villarroel R."/>
            <person name="Gielen J."/>
            <person name="Ardiles W."/>
            <person name="Bents O."/>
            <person name="Lemcke K."/>
            <person name="Kolesov G."/>
            <person name="Mayer K.F.X."/>
            <person name="Rudd S."/>
            <person name="Schoof H."/>
            <person name="Schueller C."/>
            <person name="Zaccaria P."/>
            <person name="Mewes H.-W."/>
            <person name="Bevan M."/>
            <person name="Fransz P.F."/>
        </authorList>
    </citation>
    <scope>NUCLEOTIDE SEQUENCE [LARGE SCALE GENOMIC DNA]</scope>
    <source>
        <strain>cv. Columbia</strain>
    </source>
</reference>
<reference key="2">
    <citation type="journal article" date="2017" name="Plant J.">
        <title>Araport11: a complete reannotation of the Arabidopsis thaliana reference genome.</title>
        <authorList>
            <person name="Cheng C.Y."/>
            <person name="Krishnakumar V."/>
            <person name="Chan A.P."/>
            <person name="Thibaud-Nissen F."/>
            <person name="Schobel S."/>
            <person name="Town C.D."/>
        </authorList>
    </citation>
    <scope>GENOME REANNOTATION</scope>
    <source>
        <strain>cv. Columbia</strain>
    </source>
</reference>
<reference key="3">
    <citation type="submission" date="2008-10" db="EMBL/GenBank/DDBJ databases">
        <title>Arabidopsis ORF clones.</title>
        <authorList>
            <person name="de los Reyes C."/>
            <person name="Quan R."/>
            <person name="Chen H."/>
            <person name="Bautista V."/>
            <person name="Kim C.J."/>
            <person name="Ecker J.R."/>
        </authorList>
    </citation>
    <scope>NUCLEOTIDE SEQUENCE [MRNA]</scope>
    <source>
        <strain>cv. Columbia</strain>
    </source>
</reference>
<reference key="4">
    <citation type="journal article" date="2009" name="Plant Physiol.">
        <title>ROOT UV-B SENSITIVE2 acts with ROOT UV-B SENSITIVE1 in a root ultraviolet B-sensing pathway.</title>
        <authorList>
            <person name="Leasure C.D."/>
            <person name="Tong H."/>
            <person name="Yuen G."/>
            <person name="Hou X."/>
            <person name="Sun X."/>
            <person name="He Z.H."/>
        </authorList>
    </citation>
    <scope>GENE FAMILY</scope>
    <scope>NOMENCLATURE</scope>
    <source>
        <strain>cv. Columbia</strain>
    </source>
</reference>
<dbReference type="EMBL" id="AL161946">
    <property type="protein sequence ID" value="CAB82267.1"/>
    <property type="status" value="ALT_SEQ"/>
    <property type="molecule type" value="Genomic_DNA"/>
</dbReference>
<dbReference type="EMBL" id="CP002688">
    <property type="protein sequence ID" value="AED90354.1"/>
    <property type="molecule type" value="Genomic_DNA"/>
</dbReference>
<dbReference type="EMBL" id="BT050411">
    <property type="protein sequence ID" value="ACI88737.1"/>
    <property type="molecule type" value="mRNA"/>
</dbReference>
<dbReference type="PIR" id="T48172">
    <property type="entry name" value="T48172"/>
</dbReference>
<dbReference type="RefSeq" id="NP_195771.2">
    <property type="nucleotide sequence ID" value="NM_120229.4"/>
</dbReference>
<dbReference type="FunCoup" id="B6IDH3">
    <property type="interactions" value="464"/>
</dbReference>
<dbReference type="STRING" id="3702.B6IDH3"/>
<dbReference type="PaxDb" id="3702-AT5G01510.1"/>
<dbReference type="ProteomicsDB" id="226575"/>
<dbReference type="EnsemblPlants" id="AT5G01510.1">
    <property type="protein sequence ID" value="AT5G01510.1"/>
    <property type="gene ID" value="AT5G01510"/>
</dbReference>
<dbReference type="GeneID" id="831819"/>
<dbReference type="Gramene" id="AT5G01510.1">
    <property type="protein sequence ID" value="AT5G01510.1"/>
    <property type="gene ID" value="AT5G01510"/>
</dbReference>
<dbReference type="KEGG" id="ath:AT5G01510"/>
<dbReference type="Araport" id="AT5G01510"/>
<dbReference type="TAIR" id="AT5G01510">
    <property type="gene designation" value="RUS5"/>
</dbReference>
<dbReference type="eggNOG" id="KOG4249">
    <property type="taxonomic scope" value="Eukaryota"/>
</dbReference>
<dbReference type="HOGENOM" id="CLU_015325_8_0_1"/>
<dbReference type="InParanoid" id="B6IDH3"/>
<dbReference type="OMA" id="WMSMRLL"/>
<dbReference type="PhylomeDB" id="B6IDH3"/>
<dbReference type="PRO" id="PR:B6IDH3"/>
<dbReference type="Proteomes" id="UP000006548">
    <property type="component" value="Chromosome 5"/>
</dbReference>
<dbReference type="ExpressionAtlas" id="B6IDH3">
    <property type="expression patterns" value="baseline and differential"/>
</dbReference>
<dbReference type="InterPro" id="IPR006968">
    <property type="entry name" value="RUS_fam"/>
</dbReference>
<dbReference type="InterPro" id="IPR055412">
    <property type="entry name" value="UVB_sens_C"/>
</dbReference>
<dbReference type="InterPro" id="IPR054549">
    <property type="entry name" value="UVB_sens_RUS_dom"/>
</dbReference>
<dbReference type="PANTHER" id="PTHR12770:SF27">
    <property type="entry name" value="PROTEIN ROOT UVB SENSITIVE 5"/>
    <property type="match status" value="1"/>
</dbReference>
<dbReference type="PANTHER" id="PTHR12770">
    <property type="entry name" value="RUS1 FAMILY PROTEIN C16ORF58"/>
    <property type="match status" value="1"/>
</dbReference>
<dbReference type="Pfam" id="PF24160">
    <property type="entry name" value="UVB_sens_C"/>
    <property type="match status" value="1"/>
</dbReference>
<dbReference type="Pfam" id="PF04884">
    <property type="entry name" value="UVB_sens_prot"/>
    <property type="match status" value="1"/>
</dbReference>
<comment type="similarity">
    <text evidence="3">Belongs to the RUS1 family.</text>
</comment>
<comment type="sequence caution" evidence="3">
    <conflict type="erroneous gene model prediction">
        <sequence resource="EMBL-CDS" id="CAB82267"/>
    </conflict>
</comment>
<keyword id="KW-1185">Reference proteome</keyword>